<sequence length="302" mass="34228">MTLPPLSHLDRLEAESIHILREVAAEFRAPVMLYSVGKDSSVLLHLLLKAFAPSPPPIPLLHVDTRWKFREMIAFRDRRAAETAVDLRVHINPEGVAQDIGPISHGAAVHTDVMKTQGLKQALEQGGFDAAIGGARRDEEKSRAKERVFSFRNARHRWDPKNQRPELWNLYNARTKPGESVRVFPLSNWTELDIWLYIYRERIPVVPLYFAAPRPVVQRDGAWIMVDDDRLPLHPGETPQLRSVRFRTLGCYPLTGAIESTADTLEAVIAEMLVSTSSERQGRMIDHAPGASMEQKKLEGYF</sequence>
<evidence type="ECO:0000255" key="1">
    <source>
        <dbReference type="HAMAP-Rule" id="MF_00064"/>
    </source>
</evidence>
<name>CYSD_XANC8</name>
<feature type="chain" id="PRO_0000340224" description="Sulfate adenylyltransferase subunit 2">
    <location>
        <begin position="1"/>
        <end position="302"/>
    </location>
</feature>
<reference key="1">
    <citation type="journal article" date="2005" name="Genome Res.">
        <title>Comparative and functional genomic analyses of the pathogenicity of phytopathogen Xanthomonas campestris pv. campestris.</title>
        <authorList>
            <person name="Qian W."/>
            <person name="Jia Y."/>
            <person name="Ren S.-X."/>
            <person name="He Y.-Q."/>
            <person name="Feng J.-X."/>
            <person name="Lu L.-F."/>
            <person name="Sun Q."/>
            <person name="Ying G."/>
            <person name="Tang D.-J."/>
            <person name="Tang H."/>
            <person name="Wu W."/>
            <person name="Hao P."/>
            <person name="Wang L."/>
            <person name="Jiang B.-L."/>
            <person name="Zeng S."/>
            <person name="Gu W.-Y."/>
            <person name="Lu G."/>
            <person name="Rong L."/>
            <person name="Tian Y."/>
            <person name="Yao Z."/>
            <person name="Fu G."/>
            <person name="Chen B."/>
            <person name="Fang R."/>
            <person name="Qiang B."/>
            <person name="Chen Z."/>
            <person name="Zhao G.-P."/>
            <person name="Tang J.-L."/>
            <person name="He C."/>
        </authorList>
    </citation>
    <scope>NUCLEOTIDE SEQUENCE [LARGE SCALE GENOMIC DNA]</scope>
    <source>
        <strain>8004</strain>
    </source>
</reference>
<gene>
    <name evidence="1" type="primary">cysD</name>
    <name type="ordered locus">XC_0993</name>
</gene>
<comment type="function">
    <text evidence="1">With CysN forms the ATP sulfurylase (ATPS) that catalyzes the adenylation of sulfate producing adenosine 5'-phosphosulfate (APS) and diphosphate, the first enzymatic step in sulfur assimilation pathway. APS synthesis involves the formation of a high-energy phosphoric-sulfuric acid anhydride bond driven by GTP hydrolysis by CysN coupled to ATP hydrolysis by CysD.</text>
</comment>
<comment type="catalytic activity">
    <reaction evidence="1">
        <text>sulfate + ATP + H(+) = adenosine 5'-phosphosulfate + diphosphate</text>
        <dbReference type="Rhea" id="RHEA:18133"/>
        <dbReference type="ChEBI" id="CHEBI:15378"/>
        <dbReference type="ChEBI" id="CHEBI:16189"/>
        <dbReference type="ChEBI" id="CHEBI:30616"/>
        <dbReference type="ChEBI" id="CHEBI:33019"/>
        <dbReference type="ChEBI" id="CHEBI:58243"/>
        <dbReference type="EC" id="2.7.7.4"/>
    </reaction>
</comment>
<comment type="pathway">
    <text evidence="1">Sulfur metabolism; hydrogen sulfide biosynthesis; sulfite from sulfate: step 1/3.</text>
</comment>
<comment type="subunit">
    <text evidence="1">Heterodimer composed of CysD, the smaller subunit, and CysN.</text>
</comment>
<comment type="similarity">
    <text evidence="1">Belongs to the PAPS reductase family. CysD subfamily.</text>
</comment>
<proteinExistence type="inferred from homology"/>
<keyword id="KW-0067">ATP-binding</keyword>
<keyword id="KW-0547">Nucleotide-binding</keyword>
<keyword id="KW-0548">Nucleotidyltransferase</keyword>
<keyword id="KW-0808">Transferase</keyword>
<organism>
    <name type="scientific">Xanthomonas campestris pv. campestris (strain 8004)</name>
    <dbReference type="NCBI Taxonomy" id="314565"/>
    <lineage>
        <taxon>Bacteria</taxon>
        <taxon>Pseudomonadati</taxon>
        <taxon>Pseudomonadota</taxon>
        <taxon>Gammaproteobacteria</taxon>
        <taxon>Lysobacterales</taxon>
        <taxon>Lysobacteraceae</taxon>
        <taxon>Xanthomonas</taxon>
    </lineage>
</organism>
<accession>Q4UY06</accession>
<dbReference type="EC" id="2.7.7.4" evidence="1"/>
<dbReference type="EMBL" id="CP000050">
    <property type="protein sequence ID" value="AAY48067.1"/>
    <property type="molecule type" value="Genomic_DNA"/>
</dbReference>
<dbReference type="RefSeq" id="WP_011038279.1">
    <property type="nucleotide sequence ID" value="NZ_CP155948.1"/>
</dbReference>
<dbReference type="SMR" id="Q4UY06"/>
<dbReference type="GeneID" id="58012276"/>
<dbReference type="KEGG" id="xcb:XC_0993"/>
<dbReference type="HOGENOM" id="CLU_043026_0_0_6"/>
<dbReference type="UniPathway" id="UPA00140">
    <property type="reaction ID" value="UER00204"/>
</dbReference>
<dbReference type="Proteomes" id="UP000000420">
    <property type="component" value="Chromosome"/>
</dbReference>
<dbReference type="GO" id="GO:0005524">
    <property type="term" value="F:ATP binding"/>
    <property type="evidence" value="ECO:0007669"/>
    <property type="project" value="UniProtKB-KW"/>
</dbReference>
<dbReference type="GO" id="GO:0004781">
    <property type="term" value="F:sulfate adenylyltransferase (ATP) activity"/>
    <property type="evidence" value="ECO:0007669"/>
    <property type="project" value="UniProtKB-UniRule"/>
</dbReference>
<dbReference type="GO" id="GO:0070814">
    <property type="term" value="P:hydrogen sulfide biosynthetic process"/>
    <property type="evidence" value="ECO:0007669"/>
    <property type="project" value="UniProtKB-UniRule"/>
</dbReference>
<dbReference type="GO" id="GO:0000103">
    <property type="term" value="P:sulfate assimilation"/>
    <property type="evidence" value="ECO:0007669"/>
    <property type="project" value="UniProtKB-UniRule"/>
</dbReference>
<dbReference type="CDD" id="cd23946">
    <property type="entry name" value="Sulfate_adenylyltransferase_2"/>
    <property type="match status" value="1"/>
</dbReference>
<dbReference type="FunFam" id="3.40.50.620:FF:000002">
    <property type="entry name" value="Sulfate adenylyltransferase subunit 2"/>
    <property type="match status" value="1"/>
</dbReference>
<dbReference type="Gene3D" id="3.40.50.620">
    <property type="entry name" value="HUPs"/>
    <property type="match status" value="1"/>
</dbReference>
<dbReference type="HAMAP" id="MF_00064">
    <property type="entry name" value="Sulf_adenylyltr_sub2"/>
    <property type="match status" value="1"/>
</dbReference>
<dbReference type="InterPro" id="IPR002500">
    <property type="entry name" value="PAPS_reduct_dom"/>
</dbReference>
<dbReference type="InterPro" id="IPR014729">
    <property type="entry name" value="Rossmann-like_a/b/a_fold"/>
</dbReference>
<dbReference type="InterPro" id="IPR011784">
    <property type="entry name" value="SO4_adenylTrfase_ssu"/>
</dbReference>
<dbReference type="InterPro" id="IPR050128">
    <property type="entry name" value="Sulfate_adenylyltrnsfr_sub2"/>
</dbReference>
<dbReference type="NCBIfam" id="TIGR02039">
    <property type="entry name" value="CysD"/>
    <property type="match status" value="1"/>
</dbReference>
<dbReference type="NCBIfam" id="NF003587">
    <property type="entry name" value="PRK05253.1"/>
    <property type="match status" value="1"/>
</dbReference>
<dbReference type="NCBIfam" id="NF009214">
    <property type="entry name" value="PRK12563.1"/>
    <property type="match status" value="1"/>
</dbReference>
<dbReference type="PANTHER" id="PTHR43196">
    <property type="entry name" value="SULFATE ADENYLYLTRANSFERASE SUBUNIT 2"/>
    <property type="match status" value="1"/>
</dbReference>
<dbReference type="PANTHER" id="PTHR43196:SF1">
    <property type="entry name" value="SULFATE ADENYLYLTRANSFERASE SUBUNIT 2"/>
    <property type="match status" value="1"/>
</dbReference>
<dbReference type="Pfam" id="PF01507">
    <property type="entry name" value="PAPS_reduct"/>
    <property type="match status" value="1"/>
</dbReference>
<dbReference type="PIRSF" id="PIRSF002936">
    <property type="entry name" value="CysDAde_trans"/>
    <property type="match status" value="1"/>
</dbReference>
<dbReference type="SUPFAM" id="SSF52402">
    <property type="entry name" value="Adenine nucleotide alpha hydrolases-like"/>
    <property type="match status" value="1"/>
</dbReference>
<protein>
    <recommendedName>
        <fullName evidence="1">Sulfate adenylyltransferase subunit 2</fullName>
        <ecNumber evidence="1">2.7.7.4</ecNumber>
    </recommendedName>
    <alternativeName>
        <fullName evidence="1">ATP-sulfurylase small subunit</fullName>
    </alternativeName>
    <alternativeName>
        <fullName evidence="1">Sulfate adenylate transferase</fullName>
        <shortName evidence="1">SAT</shortName>
    </alternativeName>
</protein>